<feature type="chain" id="PRO_0000443999" description="Serine/threonine-protein phosphatase 4 regulatory subunit ppfr-4">
    <location>
        <begin position="1"/>
        <end position="327"/>
    </location>
</feature>
<feature type="region of interest" description="Disordered" evidence="3">
    <location>
        <begin position="271"/>
        <end position="327"/>
    </location>
</feature>
<feature type="coiled-coil region" evidence="2">
    <location>
        <begin position="141"/>
        <end position="185"/>
    </location>
</feature>
<feature type="compositionally biased region" description="Polar residues" evidence="3">
    <location>
        <begin position="275"/>
        <end position="284"/>
    </location>
</feature>
<feature type="compositionally biased region" description="Acidic residues" evidence="3">
    <location>
        <begin position="291"/>
        <end position="301"/>
    </location>
</feature>
<feature type="compositionally biased region" description="Basic and acidic residues" evidence="3">
    <location>
        <begin position="302"/>
        <end position="318"/>
    </location>
</feature>
<organism evidence="8">
    <name type="scientific">Caenorhabditis elegans</name>
    <dbReference type="NCBI Taxonomy" id="6239"/>
    <lineage>
        <taxon>Eukaryota</taxon>
        <taxon>Metazoa</taxon>
        <taxon>Ecdysozoa</taxon>
        <taxon>Nematoda</taxon>
        <taxon>Chromadorea</taxon>
        <taxon>Rhabditida</taxon>
        <taxon>Rhabditina</taxon>
        <taxon>Rhabditomorpha</taxon>
        <taxon>Rhabditoidea</taxon>
        <taxon>Rhabditidae</taxon>
        <taxon>Peloderinae</taxon>
        <taxon>Caenorhabditis</taxon>
    </lineage>
</organism>
<reference evidence="8" key="1">
    <citation type="journal article" date="1998" name="Science">
        <title>Genome sequence of the nematode C. elegans: a platform for investigating biology.</title>
        <authorList>
            <consortium name="The C. elegans sequencing consortium"/>
        </authorList>
    </citation>
    <scope>NUCLEOTIDE SEQUENCE [LARGE SCALE GENOMIC DNA]</scope>
    <source>
        <strain evidence="8">Bristol N2</strain>
    </source>
</reference>
<reference evidence="6" key="2">
    <citation type="journal article" date="2009" name="Genetics">
        <title>The role of protein phosphatase 4 in regulating microtubule severing in the Caenorhabditis elegans embryo.</title>
        <authorList>
            <person name="Han X."/>
            <person name="Gomes J.E."/>
            <person name="Birmingham C.L."/>
            <person name="Pintard L."/>
            <person name="Sugimoto A."/>
            <person name="Mains P.E."/>
        </authorList>
    </citation>
    <scope>FUNCTION</scope>
    <scope>SUBUNIT</scope>
    <scope>DISRUPTION PHENOTYPE</scope>
</reference>
<keyword id="KW-0175">Coiled coil</keyword>
<keyword id="KW-0469">Meiosis</keyword>
<keyword id="KW-1185">Reference proteome</keyword>
<gene>
    <name evidence="5 9" type="primary">ppfr-4</name>
    <name evidence="9" type="ORF">Y71H2B.3</name>
</gene>
<name>PP4RS_CAEEL</name>
<comment type="function">
    <text evidence="4">Probable regulatory subunit of serine/threonine-protein phosphatase PP4 which may play a role in meiosis and embryonic mitosis. Probably in association with catalytic subunit pph-4.1, regulates microtubule severing during oocyte meiosis II by dephosphorylating and likely activating mei-1, a component of the katanin microtubule severing complex.</text>
</comment>
<comment type="subunit">
    <text evidence="1 7">Serine/threonine-protein phosphatase 4 (PP4) occurs in different assemblies of the catalytic and one or more regulatory subunits (By similarity). The catalytic subunit is likely to be pph-4.1 (PubMed:19087961).</text>
</comment>
<comment type="interaction">
    <interactant intactId="EBI-331766">
        <id>Q9N4E9</id>
    </interactant>
    <interactant intactId="EBI-331742">
        <id>Q9XW79</id>
        <label>pph-4.1</label>
    </interactant>
    <organismsDiffer>false</organismsDiffer>
    <experiments>3</experiments>
</comment>
<comment type="disruption phenotype">
    <text evidence="4">RNAi-mediated knockdown causes 94 percent embryonic lethality when injected compared to 20 percent when fed. Partially rescues embryonic lethality in gain of function mei-1 (ct46) mutant background.</text>
</comment>
<sequence length="327" mass="37947">MSELSDEEISLQALYDPSKKVIGDIEDGIFSTPELQPRIKTGIDNLQLVTKLVNQMRLFSSNEQIEDVPTNSLPYLLVPCFLGILHQNLMTEPGLKLDELRKSKIYMRNFLDRLRDLCLITTRLPWEDEDTEEQNLKEKPKLAVEEIRRLKLERHKKKQELKMAELRIQKQLEAVSIDEQNLRELYITQLLFWSERCYEELQAIDDELPLLKMMAERASHPHRHPAPPPATKTVPTLKPFIITRDAQQKQVFGLGYPGIPAMSVDEWYHQKFGHNPQNAPQSSAPAGAEAQESEEEVDDDEARAKAMRWDEYKDDHRRGWGNMHNKG</sequence>
<evidence type="ECO:0000250" key="1">
    <source>
        <dbReference type="UniProtKB" id="Q8TF05"/>
    </source>
</evidence>
<evidence type="ECO:0000255" key="2"/>
<evidence type="ECO:0000256" key="3">
    <source>
        <dbReference type="SAM" id="MobiDB-lite"/>
    </source>
</evidence>
<evidence type="ECO:0000269" key="4">
    <source>
    </source>
</evidence>
<evidence type="ECO:0000303" key="5">
    <source>
    </source>
</evidence>
<evidence type="ECO:0000305" key="6"/>
<evidence type="ECO:0000305" key="7">
    <source>
    </source>
</evidence>
<evidence type="ECO:0000312" key="8">
    <source>
        <dbReference type="Proteomes" id="UP000001940"/>
    </source>
</evidence>
<evidence type="ECO:0000312" key="9">
    <source>
        <dbReference type="WormBase" id="Y71H2B.3"/>
    </source>
</evidence>
<protein>
    <recommendedName>
        <fullName evidence="6">Serine/threonine-protein phosphatase 4 regulatory subunit ppfr-4</fullName>
    </recommendedName>
</protein>
<accession>Q9N4E9</accession>
<proteinExistence type="evidence at protein level"/>
<dbReference type="EMBL" id="BX284603">
    <property type="protein sequence ID" value="CCD72402.1"/>
    <property type="molecule type" value="Genomic_DNA"/>
</dbReference>
<dbReference type="RefSeq" id="NP_001370777.1">
    <property type="nucleotide sequence ID" value="NM_001384042.2"/>
</dbReference>
<dbReference type="RefSeq" id="NP_497591.1">
    <property type="nucleotide sequence ID" value="NM_065190.4"/>
</dbReference>
<dbReference type="SMR" id="Q9N4E9"/>
<dbReference type="DIP" id="DIP-27072N"/>
<dbReference type="FunCoup" id="Q9N4E9">
    <property type="interactions" value="2136"/>
</dbReference>
<dbReference type="IntAct" id="Q9N4E9">
    <property type="interactions" value="5"/>
</dbReference>
<dbReference type="STRING" id="6239.Y71H2B.3.1"/>
<dbReference type="PaxDb" id="6239-Y71H2B.3"/>
<dbReference type="PeptideAtlas" id="Q9N4E9"/>
<dbReference type="EnsemblMetazoa" id="Y71H2B.3.1">
    <property type="protein sequence ID" value="Y71H2B.3.1"/>
    <property type="gene ID" value="WBGene00022193"/>
</dbReference>
<dbReference type="GeneID" id="190617"/>
<dbReference type="UCSC" id="Y71H2B.3">
    <property type="organism name" value="c. elegans"/>
</dbReference>
<dbReference type="AGR" id="WB:WBGene00022193"/>
<dbReference type="WormBase" id="Y71H2B.3">
    <property type="protein sequence ID" value="CE24630"/>
    <property type="gene ID" value="WBGene00022193"/>
    <property type="gene designation" value="ppfr-4"/>
</dbReference>
<dbReference type="eggNOG" id="KOG2830">
    <property type="taxonomic scope" value="Eukaryota"/>
</dbReference>
<dbReference type="GeneTree" id="ENSGT00390000002414"/>
<dbReference type="HOGENOM" id="CLU_041824_1_0_1"/>
<dbReference type="InParanoid" id="Q9N4E9"/>
<dbReference type="OMA" id="EYELCEA"/>
<dbReference type="OrthoDB" id="10261753at2759"/>
<dbReference type="PhylomeDB" id="Q9N4E9"/>
<dbReference type="SignaLink" id="Q9N4E9"/>
<dbReference type="PRO" id="PR:Q9N4E9"/>
<dbReference type="Proteomes" id="UP000001940">
    <property type="component" value="Chromosome III"/>
</dbReference>
<dbReference type="Bgee" id="WBGene00022193">
    <property type="expression patterns" value="Expressed in adult organism and 3 other cell types or tissues"/>
</dbReference>
<dbReference type="GO" id="GO:0005829">
    <property type="term" value="C:cytosol"/>
    <property type="evidence" value="ECO:0000318"/>
    <property type="project" value="GO_Central"/>
</dbReference>
<dbReference type="GO" id="GO:0051721">
    <property type="term" value="F:protein phosphatase 2A binding"/>
    <property type="evidence" value="ECO:0000318"/>
    <property type="project" value="GO_Central"/>
</dbReference>
<dbReference type="GO" id="GO:0019888">
    <property type="term" value="F:protein phosphatase regulator activity"/>
    <property type="evidence" value="ECO:0000250"/>
    <property type="project" value="WormBase"/>
</dbReference>
<dbReference type="GO" id="GO:0009792">
    <property type="term" value="P:embryo development ending in birth or egg hatching"/>
    <property type="evidence" value="ECO:0000316"/>
    <property type="project" value="UniProtKB"/>
</dbReference>
<dbReference type="GO" id="GO:0051321">
    <property type="term" value="P:meiotic cell cycle"/>
    <property type="evidence" value="ECO:0007669"/>
    <property type="project" value="UniProtKB-KW"/>
</dbReference>
<dbReference type="GO" id="GO:1903361">
    <property type="term" value="P:protein localization to basolateral plasma membrane"/>
    <property type="evidence" value="ECO:0000315"/>
    <property type="project" value="WormBase"/>
</dbReference>
<dbReference type="GO" id="GO:0035303">
    <property type="term" value="P:regulation of dephosphorylation"/>
    <property type="evidence" value="ECO:0000318"/>
    <property type="project" value="GO_Central"/>
</dbReference>
<dbReference type="GO" id="GO:0009966">
    <property type="term" value="P:regulation of signal transduction"/>
    <property type="evidence" value="ECO:0007669"/>
    <property type="project" value="InterPro"/>
</dbReference>
<dbReference type="Gene3D" id="1.25.40.540">
    <property type="entry name" value="TAP42-like family"/>
    <property type="match status" value="1"/>
</dbReference>
<dbReference type="InterPro" id="IPR038511">
    <property type="entry name" value="TAP42/TAP46-like_sf"/>
</dbReference>
<dbReference type="InterPro" id="IPR007304">
    <property type="entry name" value="TAP46-like"/>
</dbReference>
<dbReference type="PANTHER" id="PTHR10933">
    <property type="entry name" value="IMMUNOGLOBULIN-BINDING PROTEIN 1"/>
    <property type="match status" value="1"/>
</dbReference>
<dbReference type="PANTHER" id="PTHR10933:SF9">
    <property type="entry name" value="IMMUNOGLOBULIN-BINDING PROTEIN 1"/>
    <property type="match status" value="1"/>
</dbReference>
<dbReference type="Pfam" id="PF04177">
    <property type="entry name" value="TAP42"/>
    <property type="match status" value="1"/>
</dbReference>